<comment type="function">
    <text>Recognizes and binds the 7-methylguanosine-containing mRNA cap during an early step in the initiation of protein synthesis and facilitates ribosome binding by inducing the unwinding of the mRNAs secondary structures.</text>
</comment>
<comment type="subunit">
    <text evidence="1">eIF4F is a multi-subunit complex, the composition of which varies with external and internal environmental conditions. It is composed of at least eIF4A, eIF4E and eIF4G. eIF4E is also known to interact with other partners (By similarity).</text>
</comment>
<comment type="PTM">
    <text evidence="3">Phosphorylation increases the ability of the protein to bind to mRNA caps and to form the eIF4F complex.</text>
</comment>
<comment type="similarity">
    <text evidence="4">Belongs to the eukaryotic initiation factor 4E family.</text>
</comment>
<accession>O77210</accession>
<keyword id="KW-0396">Initiation factor</keyword>
<keyword id="KW-0597">Phosphoprotein</keyword>
<keyword id="KW-0648">Protein biosynthesis</keyword>
<keyword id="KW-0694">RNA-binding</keyword>
<keyword id="KW-0810">Translation regulation</keyword>
<name>IF4E_APLCA</name>
<proteinExistence type="evidence at protein level"/>
<sequence length="215" mass="24646">MAERDSEPRVNIIRPDDEPEVEEERVPDPDMVIKHPLQNSWAMWFFKNDKSRDWKDNLRVITTFDTVEDFWGLYNHTLPASKLQSGCDYSVFKAGIQPMWEDAQNKKGGRWLINLNKTQRQTHLDDFWLETLLCLIGEGFDEHSEEICGATVNIRNKGDKLGLWTRDAQKTEATKKIGIKLKESLSVPPKIVIGFQAHSDTAGKAGSTVKNRFTV</sequence>
<feature type="chain" id="PRO_0000193641" description="Eukaryotic translation initiation factor 4E">
    <location>
        <begin position="1"/>
        <end position="215"/>
    </location>
</feature>
<feature type="region of interest" description="Disordered" evidence="2">
    <location>
        <begin position="1"/>
        <end position="27"/>
    </location>
</feature>
<feature type="modified residue" description="Phosphoserine; by PKC" evidence="3">
    <location>
        <position position="207"/>
    </location>
</feature>
<protein>
    <recommendedName>
        <fullName>Eukaryotic translation initiation factor 4E</fullName>
        <shortName>eIF-4E</shortName>
        <shortName>eIF4E</shortName>
    </recommendedName>
    <alternativeName>
        <fullName>eIF-4F 25 kDa subunit</fullName>
    </alternativeName>
    <alternativeName>
        <fullName>mRNA cap-binding protein</fullName>
    </alternativeName>
</protein>
<organism>
    <name type="scientific">Aplysia californica</name>
    <name type="common">California sea hare</name>
    <dbReference type="NCBI Taxonomy" id="6500"/>
    <lineage>
        <taxon>Eukaryota</taxon>
        <taxon>Metazoa</taxon>
        <taxon>Spiralia</taxon>
        <taxon>Lophotrochozoa</taxon>
        <taxon>Mollusca</taxon>
        <taxon>Gastropoda</taxon>
        <taxon>Heterobranchia</taxon>
        <taxon>Euthyneura</taxon>
        <taxon>Tectipleura</taxon>
        <taxon>Aplysiida</taxon>
        <taxon>Aplysioidea</taxon>
        <taxon>Aplysiidae</taxon>
        <taxon>Aplysia</taxon>
    </lineage>
</organism>
<reference key="1">
    <citation type="journal article" date="1998" name="J. Biol. Chem.">
        <title>Phosphorylation of eIF4E at a conserved serine in Aplysia.</title>
        <authorList>
            <person name="Dyer J.R."/>
            <person name="Pepio A.M."/>
            <person name="Yanow S.K."/>
            <person name="Sossin W.S."/>
        </authorList>
    </citation>
    <scope>NUCLEOTIDE SEQUENCE [MRNA]</scope>
    <scope>PHOSPHORYLATION AT SER-207</scope>
    <source>
        <tissue>Nerve</tissue>
    </source>
</reference>
<evidence type="ECO:0000250" key="1"/>
<evidence type="ECO:0000256" key="2">
    <source>
        <dbReference type="SAM" id="MobiDB-lite"/>
    </source>
</evidence>
<evidence type="ECO:0000269" key="3">
    <source>
    </source>
</evidence>
<evidence type="ECO:0000305" key="4"/>
<dbReference type="EMBL" id="AF085810">
    <property type="protein sequence ID" value="AAC36720.1"/>
    <property type="molecule type" value="mRNA"/>
</dbReference>
<dbReference type="RefSeq" id="NP_001191552.1">
    <property type="nucleotide sequence ID" value="NM_001204623.1"/>
</dbReference>
<dbReference type="SMR" id="O77210"/>
<dbReference type="iPTMnet" id="O77210"/>
<dbReference type="EnsemblMetazoa" id="NM_001204623.1">
    <property type="protein sequence ID" value="NP_001191552.1"/>
    <property type="gene ID" value="LOC100533326"/>
</dbReference>
<dbReference type="GeneID" id="100533326"/>
<dbReference type="OrthoDB" id="590761at2759"/>
<dbReference type="Proteomes" id="UP000694888">
    <property type="component" value="Unplaced"/>
</dbReference>
<dbReference type="GO" id="GO:0016281">
    <property type="term" value="C:eukaryotic translation initiation factor 4F complex"/>
    <property type="evidence" value="ECO:0007669"/>
    <property type="project" value="TreeGrafter"/>
</dbReference>
<dbReference type="GO" id="GO:0000340">
    <property type="term" value="F:RNA 7-methylguanosine cap binding"/>
    <property type="evidence" value="ECO:0007669"/>
    <property type="project" value="TreeGrafter"/>
</dbReference>
<dbReference type="GO" id="GO:0003743">
    <property type="term" value="F:translation initiation factor activity"/>
    <property type="evidence" value="ECO:0007669"/>
    <property type="project" value="UniProtKB-KW"/>
</dbReference>
<dbReference type="GO" id="GO:0006417">
    <property type="term" value="P:regulation of translation"/>
    <property type="evidence" value="ECO:0007669"/>
    <property type="project" value="UniProtKB-KW"/>
</dbReference>
<dbReference type="FunFam" id="3.30.760.10:FF:000002">
    <property type="entry name" value="Eukaryotic translation initiation factor 4E"/>
    <property type="match status" value="1"/>
</dbReference>
<dbReference type="Gene3D" id="3.30.760.10">
    <property type="entry name" value="RNA Cap, Translation Initiation Factor Eif4e"/>
    <property type="match status" value="1"/>
</dbReference>
<dbReference type="InterPro" id="IPR023398">
    <property type="entry name" value="TIF_eIF4e-like"/>
</dbReference>
<dbReference type="InterPro" id="IPR001040">
    <property type="entry name" value="TIF_eIF_4E"/>
</dbReference>
<dbReference type="InterPro" id="IPR019770">
    <property type="entry name" value="TIF_eIF_4E_CS"/>
</dbReference>
<dbReference type="PANTHER" id="PTHR11960">
    <property type="entry name" value="EUKARYOTIC TRANSLATION INITIATION FACTOR 4E RELATED"/>
    <property type="match status" value="1"/>
</dbReference>
<dbReference type="PANTHER" id="PTHR11960:SF8">
    <property type="entry name" value="EUKARYOTIC TRANSLATION INITIATION FACTOR 4E1-RELATED"/>
    <property type="match status" value="1"/>
</dbReference>
<dbReference type="Pfam" id="PF01652">
    <property type="entry name" value="IF4E"/>
    <property type="match status" value="1"/>
</dbReference>
<dbReference type="SUPFAM" id="SSF55418">
    <property type="entry name" value="eIF4e-like"/>
    <property type="match status" value="1"/>
</dbReference>
<dbReference type="PROSITE" id="PS00813">
    <property type="entry name" value="IF4E"/>
    <property type="match status" value="1"/>
</dbReference>